<reference key="1">
    <citation type="journal article" date="2001" name="Nature">
        <title>Genome sequence of enterohaemorrhagic Escherichia coli O157:H7.</title>
        <authorList>
            <person name="Perna N.T."/>
            <person name="Plunkett G. III"/>
            <person name="Burland V."/>
            <person name="Mau B."/>
            <person name="Glasner J.D."/>
            <person name="Rose D.J."/>
            <person name="Mayhew G.F."/>
            <person name="Evans P.S."/>
            <person name="Gregor J."/>
            <person name="Kirkpatrick H.A."/>
            <person name="Posfai G."/>
            <person name="Hackett J."/>
            <person name="Klink S."/>
            <person name="Boutin A."/>
            <person name="Shao Y."/>
            <person name="Miller L."/>
            <person name="Grotbeck E.J."/>
            <person name="Davis N.W."/>
            <person name="Lim A."/>
            <person name="Dimalanta E.T."/>
            <person name="Potamousis K."/>
            <person name="Apodaca J."/>
            <person name="Anantharaman T.S."/>
            <person name="Lin J."/>
            <person name="Yen G."/>
            <person name="Schwartz D.C."/>
            <person name="Welch R.A."/>
            <person name="Blattner F.R."/>
        </authorList>
    </citation>
    <scope>NUCLEOTIDE SEQUENCE [LARGE SCALE GENOMIC DNA]</scope>
    <source>
        <strain>O157:H7 / EDL933 / ATCC 700927 / EHEC</strain>
    </source>
</reference>
<reference key="2">
    <citation type="journal article" date="2001" name="DNA Res.">
        <title>Complete genome sequence of enterohemorrhagic Escherichia coli O157:H7 and genomic comparison with a laboratory strain K-12.</title>
        <authorList>
            <person name="Hayashi T."/>
            <person name="Makino K."/>
            <person name="Ohnishi M."/>
            <person name="Kurokawa K."/>
            <person name="Ishii K."/>
            <person name="Yokoyama K."/>
            <person name="Han C.-G."/>
            <person name="Ohtsubo E."/>
            <person name="Nakayama K."/>
            <person name="Murata T."/>
            <person name="Tanaka M."/>
            <person name="Tobe T."/>
            <person name="Iida T."/>
            <person name="Takami H."/>
            <person name="Honda T."/>
            <person name="Sasakawa C."/>
            <person name="Ogasawara N."/>
            <person name="Yasunaga T."/>
            <person name="Kuhara S."/>
            <person name="Shiba T."/>
            <person name="Hattori M."/>
            <person name="Shinagawa H."/>
        </authorList>
    </citation>
    <scope>NUCLEOTIDE SEQUENCE [LARGE SCALE GENOMIC DNA]</scope>
    <source>
        <strain>O157:H7 / Sakai / RIMD 0509952 / EHEC</strain>
    </source>
</reference>
<sequence length="352" mass="39086">MLELNFSQTLGNHCLTINETLPANGITAIFGVSGAGKTSLINAISGLTRPQKGRIVLNGRVLNDAEKGICLTPEKRRVGYVFQDARLFPHYKVRGNLRYGMAKSMVDQFDKLVALLGIEPLLDRLPGSLSGGEKQRVAIGRALLTAPELLLLDEPLASLDIPRKRELLPYLQRLTREINIPMLYVSHSLDEILHLADRVMVLENGQVKAFGALEEVWGSSVMNPWLPKEQQSSILKVTVLEHHPHYAMTALALGDQHLWVNKLDEPLQAALRIRIQASDVSLVLQPPQQTSIRNVLRAKVVNSYDDNGQVEVELEVGGKTLWARISPWARDELAIKPGLWLYAQIKSVSITA</sequence>
<gene>
    <name evidence="1" type="primary">modC</name>
    <name type="ordered locus">Z0935</name>
    <name type="ordered locus">ECs0793</name>
</gene>
<protein>
    <recommendedName>
        <fullName evidence="1">Molybdenum import ATP-binding protein ModC</fullName>
        <ecNumber evidence="1">7.3.2.5</ecNumber>
    </recommendedName>
</protein>
<proteinExistence type="inferred from homology"/>
<name>MODC_ECO57</name>
<keyword id="KW-0067">ATP-binding</keyword>
<keyword id="KW-0997">Cell inner membrane</keyword>
<keyword id="KW-1003">Cell membrane</keyword>
<keyword id="KW-0472">Membrane</keyword>
<keyword id="KW-0500">Molybdenum</keyword>
<keyword id="KW-0547">Nucleotide-binding</keyword>
<keyword id="KW-1185">Reference proteome</keyword>
<keyword id="KW-1278">Translocase</keyword>
<keyword id="KW-0813">Transport</keyword>
<evidence type="ECO:0000255" key="1">
    <source>
        <dbReference type="HAMAP-Rule" id="MF_01705"/>
    </source>
</evidence>
<evidence type="ECO:0000255" key="2">
    <source>
        <dbReference type="PROSITE-ProRule" id="PRU01213"/>
    </source>
</evidence>
<dbReference type="EC" id="7.3.2.5" evidence="1"/>
<dbReference type="EMBL" id="AE005174">
    <property type="protein sequence ID" value="AAG55094.1"/>
    <property type="molecule type" value="Genomic_DNA"/>
</dbReference>
<dbReference type="EMBL" id="BA000007">
    <property type="protein sequence ID" value="BAB34216.1"/>
    <property type="molecule type" value="Genomic_DNA"/>
</dbReference>
<dbReference type="PIR" id="A90728">
    <property type="entry name" value="A90728"/>
</dbReference>
<dbReference type="PIR" id="B85579">
    <property type="entry name" value="B85579"/>
</dbReference>
<dbReference type="RefSeq" id="NP_308820.1">
    <property type="nucleotide sequence ID" value="NC_002695.1"/>
</dbReference>
<dbReference type="RefSeq" id="WP_000891683.1">
    <property type="nucleotide sequence ID" value="NZ_VOAI01000019.1"/>
</dbReference>
<dbReference type="SMR" id="Q8X4V7"/>
<dbReference type="STRING" id="155864.Z0935"/>
<dbReference type="GeneID" id="917533"/>
<dbReference type="KEGG" id="ece:Z0935"/>
<dbReference type="KEGG" id="ecs:ECs_0793"/>
<dbReference type="PATRIC" id="fig|386585.9.peg.913"/>
<dbReference type="eggNOG" id="COG4148">
    <property type="taxonomic scope" value="Bacteria"/>
</dbReference>
<dbReference type="HOGENOM" id="CLU_000604_1_1_6"/>
<dbReference type="OMA" id="QWLYAQI"/>
<dbReference type="Proteomes" id="UP000000558">
    <property type="component" value="Chromosome"/>
</dbReference>
<dbReference type="Proteomes" id="UP000002519">
    <property type="component" value="Chromosome"/>
</dbReference>
<dbReference type="GO" id="GO:0005886">
    <property type="term" value="C:plasma membrane"/>
    <property type="evidence" value="ECO:0007669"/>
    <property type="project" value="UniProtKB-SubCell"/>
</dbReference>
<dbReference type="GO" id="GO:0015412">
    <property type="term" value="F:ABC-type molybdate transporter activity"/>
    <property type="evidence" value="ECO:0007669"/>
    <property type="project" value="UniProtKB-EC"/>
</dbReference>
<dbReference type="GO" id="GO:0005524">
    <property type="term" value="F:ATP binding"/>
    <property type="evidence" value="ECO:0007669"/>
    <property type="project" value="UniProtKB-KW"/>
</dbReference>
<dbReference type="GO" id="GO:0016887">
    <property type="term" value="F:ATP hydrolysis activity"/>
    <property type="evidence" value="ECO:0007669"/>
    <property type="project" value="InterPro"/>
</dbReference>
<dbReference type="FunFam" id="2.40.50.100:FF:000037">
    <property type="entry name" value="Molybdenum import ATP-binding protein ModC"/>
    <property type="match status" value="1"/>
</dbReference>
<dbReference type="FunFam" id="3.40.50.300:FF:000634">
    <property type="entry name" value="Molybdenum import ATP-binding protein ModC"/>
    <property type="match status" value="1"/>
</dbReference>
<dbReference type="Gene3D" id="2.40.50.100">
    <property type="match status" value="1"/>
</dbReference>
<dbReference type="Gene3D" id="3.40.50.300">
    <property type="entry name" value="P-loop containing nucleotide triphosphate hydrolases"/>
    <property type="match status" value="1"/>
</dbReference>
<dbReference type="InterPro" id="IPR003593">
    <property type="entry name" value="AAA+_ATPase"/>
</dbReference>
<dbReference type="InterPro" id="IPR003439">
    <property type="entry name" value="ABC_transporter-like_ATP-bd"/>
</dbReference>
<dbReference type="InterPro" id="IPR017871">
    <property type="entry name" value="ABC_transporter-like_CS"/>
</dbReference>
<dbReference type="InterPro" id="IPR008995">
    <property type="entry name" value="Mo/tungstate-bd_C_term_dom"/>
</dbReference>
<dbReference type="InterPro" id="IPR011868">
    <property type="entry name" value="ModC_ABC_ATP-bd"/>
</dbReference>
<dbReference type="InterPro" id="IPR050334">
    <property type="entry name" value="Molybdenum_import_ModC"/>
</dbReference>
<dbReference type="InterPro" id="IPR004606">
    <property type="entry name" value="Mop_domain"/>
</dbReference>
<dbReference type="InterPro" id="IPR027417">
    <property type="entry name" value="P-loop_NTPase"/>
</dbReference>
<dbReference type="InterPro" id="IPR005116">
    <property type="entry name" value="Transp-assoc_OB_typ1"/>
</dbReference>
<dbReference type="NCBIfam" id="TIGR02142">
    <property type="entry name" value="modC_ABC"/>
    <property type="match status" value="1"/>
</dbReference>
<dbReference type="NCBIfam" id="TIGR00638">
    <property type="entry name" value="Mop"/>
    <property type="match status" value="1"/>
</dbReference>
<dbReference type="NCBIfam" id="NF008355">
    <property type="entry name" value="PRK11144.1"/>
    <property type="match status" value="1"/>
</dbReference>
<dbReference type="PANTHER" id="PTHR43514">
    <property type="entry name" value="ABC TRANSPORTER I FAMILY MEMBER 10"/>
    <property type="match status" value="1"/>
</dbReference>
<dbReference type="PANTHER" id="PTHR43514:SF4">
    <property type="entry name" value="ABC TRANSPORTER I FAMILY MEMBER 10"/>
    <property type="match status" value="1"/>
</dbReference>
<dbReference type="Pfam" id="PF00005">
    <property type="entry name" value="ABC_tran"/>
    <property type="match status" value="1"/>
</dbReference>
<dbReference type="Pfam" id="PF03459">
    <property type="entry name" value="TOBE"/>
    <property type="match status" value="1"/>
</dbReference>
<dbReference type="SMART" id="SM00382">
    <property type="entry name" value="AAA"/>
    <property type="match status" value="1"/>
</dbReference>
<dbReference type="SUPFAM" id="SSF50331">
    <property type="entry name" value="MOP-like"/>
    <property type="match status" value="1"/>
</dbReference>
<dbReference type="SUPFAM" id="SSF52540">
    <property type="entry name" value="P-loop containing nucleoside triphosphate hydrolases"/>
    <property type="match status" value="1"/>
</dbReference>
<dbReference type="PROSITE" id="PS00211">
    <property type="entry name" value="ABC_TRANSPORTER_1"/>
    <property type="match status" value="1"/>
</dbReference>
<dbReference type="PROSITE" id="PS50893">
    <property type="entry name" value="ABC_TRANSPORTER_2"/>
    <property type="match status" value="1"/>
</dbReference>
<dbReference type="PROSITE" id="PS51241">
    <property type="entry name" value="MODC"/>
    <property type="match status" value="1"/>
</dbReference>
<dbReference type="PROSITE" id="PS51866">
    <property type="entry name" value="MOP"/>
    <property type="match status" value="1"/>
</dbReference>
<comment type="function">
    <text evidence="1">Part of the ABC transporter complex ModABC involved in molybdenum import. Responsible for energy coupling to the transport system.</text>
</comment>
<comment type="catalytic activity">
    <reaction evidence="1">
        <text>molybdate(out) + ATP + H2O = molybdate(in) + ADP + phosphate + H(+)</text>
        <dbReference type="Rhea" id="RHEA:22020"/>
        <dbReference type="ChEBI" id="CHEBI:15377"/>
        <dbReference type="ChEBI" id="CHEBI:15378"/>
        <dbReference type="ChEBI" id="CHEBI:30616"/>
        <dbReference type="ChEBI" id="CHEBI:36264"/>
        <dbReference type="ChEBI" id="CHEBI:43474"/>
        <dbReference type="ChEBI" id="CHEBI:456216"/>
        <dbReference type="EC" id="7.3.2.5"/>
    </reaction>
</comment>
<comment type="subunit">
    <text evidence="1">The complex is composed of two ATP-binding proteins (ModC), two transmembrane proteins (ModB) and a solute-binding protein (ModA).</text>
</comment>
<comment type="subcellular location">
    <subcellularLocation>
        <location evidence="1">Cell inner membrane</location>
        <topology evidence="1">Peripheral membrane protein</topology>
    </subcellularLocation>
</comment>
<comment type="similarity">
    <text evidence="1">Belongs to the ABC transporter superfamily. Molybdate importer (TC 3.A.1.8) family.</text>
</comment>
<accession>Q8X4V7</accession>
<feature type="chain" id="PRO_0000092539" description="Molybdenum import ATP-binding protein ModC">
    <location>
        <begin position="1"/>
        <end position="352"/>
    </location>
</feature>
<feature type="domain" description="ABC transporter" evidence="1">
    <location>
        <begin position="1"/>
        <end position="229"/>
    </location>
</feature>
<feature type="domain" description="Mop" evidence="2">
    <location>
        <begin position="289"/>
        <end position="352"/>
    </location>
</feature>
<feature type="binding site" evidence="1">
    <location>
        <begin position="31"/>
        <end position="38"/>
    </location>
    <ligand>
        <name>ATP</name>
        <dbReference type="ChEBI" id="CHEBI:30616"/>
    </ligand>
</feature>
<organism>
    <name type="scientific">Escherichia coli O157:H7</name>
    <dbReference type="NCBI Taxonomy" id="83334"/>
    <lineage>
        <taxon>Bacteria</taxon>
        <taxon>Pseudomonadati</taxon>
        <taxon>Pseudomonadota</taxon>
        <taxon>Gammaproteobacteria</taxon>
        <taxon>Enterobacterales</taxon>
        <taxon>Enterobacteriaceae</taxon>
        <taxon>Escherichia</taxon>
    </lineage>
</organism>